<reference key="1">
    <citation type="journal article" date="1999" name="J. Mammal. Evol.">
        <title>Phylogenetic relationships and the radiation of Sigmodontine rodents in South America: evidence from cytochrome b.</title>
        <authorList>
            <person name="Smith M.F."/>
            <person name="Patton J.L."/>
        </authorList>
    </citation>
    <scope>NUCLEOTIDE SEQUENCE [GENOMIC DNA]</scope>
</reference>
<feature type="chain" id="PRO_0000255562" description="Cytochrome b">
    <location>
        <begin position="1"/>
        <end position="379"/>
    </location>
</feature>
<feature type="transmembrane region" description="Helical" evidence="2">
    <location>
        <begin position="33"/>
        <end position="53"/>
    </location>
</feature>
<feature type="transmembrane region" description="Helical" evidence="2">
    <location>
        <begin position="77"/>
        <end position="98"/>
    </location>
</feature>
<feature type="transmembrane region" description="Helical" evidence="2">
    <location>
        <begin position="113"/>
        <end position="133"/>
    </location>
</feature>
<feature type="transmembrane region" description="Helical" evidence="2">
    <location>
        <begin position="178"/>
        <end position="198"/>
    </location>
</feature>
<feature type="transmembrane region" description="Helical" evidence="2">
    <location>
        <begin position="226"/>
        <end position="246"/>
    </location>
</feature>
<feature type="transmembrane region" description="Helical" evidence="2">
    <location>
        <begin position="288"/>
        <end position="308"/>
    </location>
</feature>
<feature type="transmembrane region" description="Helical" evidence="2">
    <location>
        <begin position="320"/>
        <end position="340"/>
    </location>
</feature>
<feature type="transmembrane region" description="Helical" evidence="2">
    <location>
        <begin position="347"/>
        <end position="367"/>
    </location>
</feature>
<feature type="binding site" description="axial binding residue" evidence="2">
    <location>
        <position position="83"/>
    </location>
    <ligand>
        <name>heme b</name>
        <dbReference type="ChEBI" id="CHEBI:60344"/>
        <label>b562</label>
    </ligand>
    <ligandPart>
        <name>Fe</name>
        <dbReference type="ChEBI" id="CHEBI:18248"/>
    </ligandPart>
</feature>
<feature type="binding site" description="axial binding residue" evidence="2">
    <location>
        <position position="97"/>
    </location>
    <ligand>
        <name>heme b</name>
        <dbReference type="ChEBI" id="CHEBI:60344"/>
        <label>b566</label>
    </ligand>
    <ligandPart>
        <name>Fe</name>
        <dbReference type="ChEBI" id="CHEBI:18248"/>
    </ligandPart>
</feature>
<feature type="binding site" description="axial binding residue" evidence="2">
    <location>
        <position position="182"/>
    </location>
    <ligand>
        <name>heme b</name>
        <dbReference type="ChEBI" id="CHEBI:60344"/>
        <label>b562</label>
    </ligand>
    <ligandPart>
        <name>Fe</name>
        <dbReference type="ChEBI" id="CHEBI:18248"/>
    </ligandPart>
</feature>
<feature type="binding site" description="axial binding residue" evidence="2">
    <location>
        <position position="196"/>
    </location>
    <ligand>
        <name>heme b</name>
        <dbReference type="ChEBI" id="CHEBI:60344"/>
        <label>b566</label>
    </ligand>
    <ligandPart>
        <name>Fe</name>
        <dbReference type="ChEBI" id="CHEBI:18248"/>
    </ligandPart>
</feature>
<feature type="binding site" evidence="2">
    <location>
        <position position="201"/>
    </location>
    <ligand>
        <name>a ubiquinone</name>
        <dbReference type="ChEBI" id="CHEBI:16389"/>
    </ligand>
</feature>
<protein>
    <recommendedName>
        <fullName>Cytochrome b</fullName>
    </recommendedName>
    <alternativeName>
        <fullName>Complex III subunit 3</fullName>
    </alternativeName>
    <alternativeName>
        <fullName>Complex III subunit III</fullName>
    </alternativeName>
    <alternativeName>
        <fullName>Cytochrome b-c1 complex subunit 3</fullName>
    </alternativeName>
    <alternativeName>
        <fullName>Ubiquinol-cytochrome-c reductase complex cytochrome b subunit</fullName>
    </alternativeName>
</protein>
<name>CYB_THANG</name>
<comment type="function">
    <text evidence="2">Component of the ubiquinol-cytochrome c reductase complex (complex III or cytochrome b-c1 complex) that is part of the mitochondrial respiratory chain. The b-c1 complex mediates electron transfer from ubiquinol to cytochrome c. Contributes to the generation of a proton gradient across the mitochondrial membrane that is then used for ATP synthesis.</text>
</comment>
<comment type="cofactor">
    <cofactor evidence="2">
        <name>heme b</name>
        <dbReference type="ChEBI" id="CHEBI:60344"/>
    </cofactor>
    <text evidence="2">Binds 2 heme b groups non-covalently.</text>
</comment>
<comment type="subunit">
    <text evidence="2">The cytochrome bc1 complex contains 11 subunits: 3 respiratory subunits (MT-CYB, CYC1 and UQCRFS1), 2 core proteins (UQCRC1 and UQCRC2) and 6 low-molecular weight proteins (UQCRH/QCR6, UQCRB/QCR7, UQCRQ/QCR8, UQCR10/QCR9, UQCR11/QCR10 and a cleavage product of UQCRFS1). This cytochrome bc1 complex then forms a dimer.</text>
</comment>
<comment type="subcellular location">
    <subcellularLocation>
        <location evidence="2">Mitochondrion inner membrane</location>
        <topology evidence="2">Multi-pass membrane protein</topology>
    </subcellularLocation>
</comment>
<comment type="miscellaneous">
    <text evidence="1">Heme 1 (or BL or b562) is low-potential and absorbs at about 562 nm, and heme 2 (or BH or b566) is high-potential and absorbs at about 566 nm.</text>
</comment>
<comment type="similarity">
    <text evidence="3 4">Belongs to the cytochrome b family.</text>
</comment>
<comment type="caution">
    <text evidence="2">The full-length protein contains only eight transmembrane helices, not nine as predicted by bioinformatics tools.</text>
</comment>
<geneLocation type="mitochondrion"/>
<proteinExistence type="inferred from homology"/>
<evidence type="ECO:0000250" key="1"/>
<evidence type="ECO:0000250" key="2">
    <source>
        <dbReference type="UniProtKB" id="P00157"/>
    </source>
</evidence>
<evidence type="ECO:0000255" key="3">
    <source>
        <dbReference type="PROSITE-ProRule" id="PRU00967"/>
    </source>
</evidence>
<evidence type="ECO:0000255" key="4">
    <source>
        <dbReference type="PROSITE-ProRule" id="PRU00968"/>
    </source>
</evidence>
<accession>Q9XNX8</accession>
<sequence>MKIMRKNHPLLKIINHSFIDLPTPSNISSWWNFGSLLGACLIIQILTGLFLAMHYTSDTTTAFSSVAHICRDVNYGWLIRYLHANGASMFFICLSIHAGRGIYYGSYVLSETWNIGIILFLTTMATAFVGYVLPWGQMSFWGATVITNLLSAIPYIGSTLFEWIWGGFSVDKATLTRFFAFHFILPFIITAFVLVHLLFLHETGSNNPSGLNSNSDKIPFHPYYTIKDLLGVFLLLLALMILALFFPDVLGDPDNFTPANPLNTPAHIKPEWYFLFAYAILRSIPNKLGGVLALILSILILAAFPLLNVSKQHGLIFRPITQTIYWIFIANLLVLTWIGGQPVXYPFTMIGQIASITYFAIILILMPISNTIENNIIKL</sequence>
<gene>
    <name type="primary">MT-CYB</name>
    <name type="synonym">COB</name>
    <name type="synonym">CYTB</name>
    <name type="synonym">MTCYB</name>
</gene>
<organism>
    <name type="scientific">Thaptomys nigrita</name>
    <name type="common">Blackish grass mouse</name>
    <name type="synonym">Akodon nigrita</name>
    <dbReference type="NCBI Taxonomy" id="89133"/>
    <lineage>
        <taxon>Eukaryota</taxon>
        <taxon>Metazoa</taxon>
        <taxon>Chordata</taxon>
        <taxon>Craniata</taxon>
        <taxon>Vertebrata</taxon>
        <taxon>Euteleostomi</taxon>
        <taxon>Mammalia</taxon>
        <taxon>Eutheria</taxon>
        <taxon>Euarchontoglires</taxon>
        <taxon>Glires</taxon>
        <taxon>Rodentia</taxon>
        <taxon>Myomorpha</taxon>
        <taxon>Muroidea</taxon>
        <taxon>Cricetidae</taxon>
        <taxon>Sigmodontinae</taxon>
        <taxon>Thaptomys</taxon>
    </lineage>
</organism>
<dbReference type="EMBL" id="AF108666">
    <property type="protein sequence ID" value="AAD45448.1"/>
    <property type="molecule type" value="Genomic_DNA"/>
</dbReference>
<dbReference type="GO" id="GO:0005743">
    <property type="term" value="C:mitochondrial inner membrane"/>
    <property type="evidence" value="ECO:0007669"/>
    <property type="project" value="UniProtKB-SubCell"/>
</dbReference>
<dbReference type="GO" id="GO:0045275">
    <property type="term" value="C:respiratory chain complex III"/>
    <property type="evidence" value="ECO:0007669"/>
    <property type="project" value="InterPro"/>
</dbReference>
<dbReference type="GO" id="GO:0046872">
    <property type="term" value="F:metal ion binding"/>
    <property type="evidence" value="ECO:0007669"/>
    <property type="project" value="UniProtKB-KW"/>
</dbReference>
<dbReference type="GO" id="GO:0008121">
    <property type="term" value="F:ubiquinol-cytochrome-c reductase activity"/>
    <property type="evidence" value="ECO:0007669"/>
    <property type="project" value="InterPro"/>
</dbReference>
<dbReference type="GO" id="GO:0006122">
    <property type="term" value="P:mitochondrial electron transport, ubiquinol to cytochrome c"/>
    <property type="evidence" value="ECO:0007669"/>
    <property type="project" value="TreeGrafter"/>
</dbReference>
<dbReference type="CDD" id="cd00290">
    <property type="entry name" value="cytochrome_b_C"/>
    <property type="match status" value="1"/>
</dbReference>
<dbReference type="CDD" id="cd00284">
    <property type="entry name" value="Cytochrome_b_N"/>
    <property type="match status" value="1"/>
</dbReference>
<dbReference type="FunFam" id="1.20.810.10:FF:000002">
    <property type="entry name" value="Cytochrome b"/>
    <property type="match status" value="1"/>
</dbReference>
<dbReference type="Gene3D" id="1.20.810.10">
    <property type="entry name" value="Cytochrome Bc1 Complex, Chain C"/>
    <property type="match status" value="1"/>
</dbReference>
<dbReference type="InterPro" id="IPR005798">
    <property type="entry name" value="Cyt_b/b6_C"/>
</dbReference>
<dbReference type="InterPro" id="IPR036150">
    <property type="entry name" value="Cyt_b/b6_C_sf"/>
</dbReference>
<dbReference type="InterPro" id="IPR005797">
    <property type="entry name" value="Cyt_b/b6_N"/>
</dbReference>
<dbReference type="InterPro" id="IPR027387">
    <property type="entry name" value="Cytb/b6-like_sf"/>
</dbReference>
<dbReference type="InterPro" id="IPR030689">
    <property type="entry name" value="Cytochrome_b"/>
</dbReference>
<dbReference type="InterPro" id="IPR048260">
    <property type="entry name" value="Cytochrome_b_C_euk/bac"/>
</dbReference>
<dbReference type="InterPro" id="IPR048259">
    <property type="entry name" value="Cytochrome_b_N_euk/bac"/>
</dbReference>
<dbReference type="InterPro" id="IPR016174">
    <property type="entry name" value="Di-haem_cyt_TM"/>
</dbReference>
<dbReference type="PANTHER" id="PTHR19271">
    <property type="entry name" value="CYTOCHROME B"/>
    <property type="match status" value="1"/>
</dbReference>
<dbReference type="PANTHER" id="PTHR19271:SF16">
    <property type="entry name" value="CYTOCHROME B"/>
    <property type="match status" value="1"/>
</dbReference>
<dbReference type="Pfam" id="PF00032">
    <property type="entry name" value="Cytochrom_B_C"/>
    <property type="match status" value="1"/>
</dbReference>
<dbReference type="Pfam" id="PF00033">
    <property type="entry name" value="Cytochrome_B"/>
    <property type="match status" value="1"/>
</dbReference>
<dbReference type="PIRSF" id="PIRSF038885">
    <property type="entry name" value="COB"/>
    <property type="match status" value="1"/>
</dbReference>
<dbReference type="SUPFAM" id="SSF81648">
    <property type="entry name" value="a domain/subunit of cytochrome bc1 complex (Ubiquinol-cytochrome c reductase)"/>
    <property type="match status" value="1"/>
</dbReference>
<dbReference type="SUPFAM" id="SSF81342">
    <property type="entry name" value="Transmembrane di-heme cytochromes"/>
    <property type="match status" value="1"/>
</dbReference>
<dbReference type="PROSITE" id="PS51003">
    <property type="entry name" value="CYTB_CTER"/>
    <property type="match status" value="1"/>
</dbReference>
<dbReference type="PROSITE" id="PS51002">
    <property type="entry name" value="CYTB_NTER"/>
    <property type="match status" value="1"/>
</dbReference>
<keyword id="KW-0249">Electron transport</keyword>
<keyword id="KW-0349">Heme</keyword>
<keyword id="KW-0408">Iron</keyword>
<keyword id="KW-0472">Membrane</keyword>
<keyword id="KW-0479">Metal-binding</keyword>
<keyword id="KW-0496">Mitochondrion</keyword>
<keyword id="KW-0999">Mitochondrion inner membrane</keyword>
<keyword id="KW-0679">Respiratory chain</keyword>
<keyword id="KW-0812">Transmembrane</keyword>
<keyword id="KW-1133">Transmembrane helix</keyword>
<keyword id="KW-0813">Transport</keyword>
<keyword id="KW-0830">Ubiquinone</keyword>